<evidence type="ECO:0000250" key="1"/>
<evidence type="ECO:0000305" key="2"/>
<accession>P00728</accession>
<protein>
    <recommendedName>
        <fullName>Thermophilic aminopeptidase 1 alpha chain</fullName>
        <ecNumber>3.4.11.-</ecNumber>
    </recommendedName>
    <alternativeName>
        <fullName>Thermophilic aminopeptidase I alpha chain</fullName>
    </alternativeName>
</protein>
<proteinExistence type="evidence at protein level"/>
<feature type="chain" id="PRO_0000071652" description="Thermophilic aminopeptidase 1 alpha chain">
    <location>
        <begin position="1"/>
        <end position="30" status="greater than"/>
    </location>
</feature>
<feature type="non-terminal residue">
    <location>
        <position position="30"/>
    </location>
</feature>
<name>AMPT_GEOSE</name>
<organism>
    <name type="scientific">Geobacillus stearothermophilus</name>
    <name type="common">Bacillus stearothermophilus</name>
    <dbReference type="NCBI Taxonomy" id="1422"/>
    <lineage>
        <taxon>Bacteria</taxon>
        <taxon>Bacillati</taxon>
        <taxon>Bacillota</taxon>
        <taxon>Bacilli</taxon>
        <taxon>Bacillales</taxon>
        <taxon>Anoxybacillaceae</taxon>
        <taxon>Geobacillus</taxon>
    </lineage>
</organism>
<sequence length="30" mass="3274">AKLDETLTMLKALTDAKGVPGNEREARDVM</sequence>
<dbReference type="EC" id="3.4.11.-"/>
<dbReference type="PIR" id="A00908">
    <property type="entry name" value="AIBSAF"/>
</dbReference>
<dbReference type="SMR" id="P00728"/>
<dbReference type="GO" id="GO:0004177">
    <property type="term" value="F:aminopeptidase activity"/>
    <property type="evidence" value="ECO:0007669"/>
    <property type="project" value="UniProtKB-KW"/>
</dbReference>
<dbReference type="GO" id="GO:0008237">
    <property type="term" value="F:metallopeptidase activity"/>
    <property type="evidence" value="ECO:0007669"/>
    <property type="project" value="UniProtKB-KW"/>
</dbReference>
<dbReference type="GO" id="GO:0006508">
    <property type="term" value="P:proteolysis"/>
    <property type="evidence" value="ECO:0007669"/>
    <property type="project" value="UniProtKB-KW"/>
</dbReference>
<comment type="function">
    <text>Metalloenzyme of broad specificity, releasing all N-terminal amino acids.</text>
</comment>
<comment type="cofactor">
    <cofactor evidence="1">
        <name>a divalent metal cation</name>
        <dbReference type="ChEBI" id="CHEBI:60240"/>
    </cofactor>
    <text evidence="1">Binds 2 divalent metal cations per subunit.</text>
</comment>
<comment type="biophysicochemical properties">
    <temperatureDependence>
        <text>Highly thermostable.</text>
    </temperatureDependence>
</comment>
<comment type="subunit">
    <text>12 chains of two different but homologous types, alpha and beta, which can combine in various ratios.</text>
</comment>
<comment type="similarity">
    <text evidence="2">Belongs to the peptidase M42 family.</text>
</comment>
<keyword id="KW-0031">Aminopeptidase</keyword>
<keyword id="KW-0903">Direct protein sequencing</keyword>
<keyword id="KW-0378">Hydrolase</keyword>
<keyword id="KW-0482">Metalloprotease</keyword>
<keyword id="KW-0645">Protease</keyword>
<reference key="1">
    <citation type="journal article" date="1973" name="Proc. Natl. Acad. Sci. U.S.A.">
        <title>The function of the two subunits of thermophilic aminopeptidase I.</title>
        <authorList>
            <person name="Stoll E."/>
            <person name="Ericsson L.H."/>
            <person name="Zuber H."/>
        </authorList>
    </citation>
    <scope>PROTEIN SEQUENCE</scope>
    <source>
        <strain>ATCC 29609 / DSM 2027 / NCA 1503 / NCIMB 8924</strain>
    </source>
</reference>